<protein>
    <recommendedName>
        <fullName evidence="1">Pyrimidine/purine nucleoside phosphorylase 2</fullName>
        <ecNumber evidence="1">2.4.2.1</ecNumber>
        <ecNumber evidence="1">2.4.2.2</ecNumber>
    </recommendedName>
    <alternativeName>
        <fullName evidence="1">Adenosine phosphorylase 2</fullName>
    </alternativeName>
    <alternativeName>
        <fullName evidence="1">Cytidine phosphorylase 2</fullName>
    </alternativeName>
    <alternativeName>
        <fullName evidence="1">Guanosine phosphorylase 2</fullName>
    </alternativeName>
    <alternativeName>
        <fullName evidence="1">Inosine phosphorylase 2</fullName>
    </alternativeName>
    <alternativeName>
        <fullName evidence="1">Thymidine phosphorylase 2</fullName>
    </alternativeName>
    <alternativeName>
        <fullName evidence="1">Uridine phosphorylase 2</fullName>
    </alternativeName>
    <alternativeName>
        <fullName evidence="1">Xanthosine phosphorylase 2</fullName>
    </alternativeName>
</protein>
<accession>Q4FTI5</accession>
<gene>
    <name evidence="1" type="primary">ppnP2</name>
    <name type="ordered locus">Psyc_0820</name>
</gene>
<comment type="function">
    <text evidence="1">Catalyzes the phosphorolysis of diverse nucleosides, yielding D-ribose 1-phosphate and the respective free bases. Can use uridine, adenosine, guanosine, cytidine, thymidine, inosine and xanthosine as substrates. Also catalyzes the reverse reactions.</text>
</comment>
<comment type="catalytic activity">
    <reaction evidence="1">
        <text>a purine D-ribonucleoside + phosphate = a purine nucleobase + alpha-D-ribose 1-phosphate</text>
        <dbReference type="Rhea" id="RHEA:19805"/>
        <dbReference type="ChEBI" id="CHEBI:26386"/>
        <dbReference type="ChEBI" id="CHEBI:43474"/>
        <dbReference type="ChEBI" id="CHEBI:57720"/>
        <dbReference type="ChEBI" id="CHEBI:142355"/>
        <dbReference type="EC" id="2.4.2.1"/>
    </reaction>
</comment>
<comment type="catalytic activity">
    <reaction evidence="1">
        <text>adenosine + phosphate = alpha-D-ribose 1-phosphate + adenine</text>
        <dbReference type="Rhea" id="RHEA:27642"/>
        <dbReference type="ChEBI" id="CHEBI:16335"/>
        <dbReference type="ChEBI" id="CHEBI:16708"/>
        <dbReference type="ChEBI" id="CHEBI:43474"/>
        <dbReference type="ChEBI" id="CHEBI:57720"/>
        <dbReference type="EC" id="2.4.2.1"/>
    </reaction>
</comment>
<comment type="catalytic activity">
    <reaction evidence="1">
        <text>cytidine + phosphate = cytosine + alpha-D-ribose 1-phosphate</text>
        <dbReference type="Rhea" id="RHEA:52540"/>
        <dbReference type="ChEBI" id="CHEBI:16040"/>
        <dbReference type="ChEBI" id="CHEBI:17562"/>
        <dbReference type="ChEBI" id="CHEBI:43474"/>
        <dbReference type="ChEBI" id="CHEBI:57720"/>
        <dbReference type="EC" id="2.4.2.2"/>
    </reaction>
</comment>
<comment type="catalytic activity">
    <reaction evidence="1">
        <text>guanosine + phosphate = alpha-D-ribose 1-phosphate + guanine</text>
        <dbReference type="Rhea" id="RHEA:13233"/>
        <dbReference type="ChEBI" id="CHEBI:16235"/>
        <dbReference type="ChEBI" id="CHEBI:16750"/>
        <dbReference type="ChEBI" id="CHEBI:43474"/>
        <dbReference type="ChEBI" id="CHEBI:57720"/>
        <dbReference type="EC" id="2.4.2.1"/>
    </reaction>
</comment>
<comment type="catalytic activity">
    <reaction evidence="1">
        <text>inosine + phosphate = alpha-D-ribose 1-phosphate + hypoxanthine</text>
        <dbReference type="Rhea" id="RHEA:27646"/>
        <dbReference type="ChEBI" id="CHEBI:17368"/>
        <dbReference type="ChEBI" id="CHEBI:17596"/>
        <dbReference type="ChEBI" id="CHEBI:43474"/>
        <dbReference type="ChEBI" id="CHEBI:57720"/>
        <dbReference type="EC" id="2.4.2.1"/>
    </reaction>
</comment>
<comment type="catalytic activity">
    <reaction evidence="1">
        <text>thymidine + phosphate = 2-deoxy-alpha-D-ribose 1-phosphate + thymine</text>
        <dbReference type="Rhea" id="RHEA:16037"/>
        <dbReference type="ChEBI" id="CHEBI:17748"/>
        <dbReference type="ChEBI" id="CHEBI:17821"/>
        <dbReference type="ChEBI" id="CHEBI:43474"/>
        <dbReference type="ChEBI" id="CHEBI:57259"/>
        <dbReference type="EC" id="2.4.2.2"/>
    </reaction>
</comment>
<comment type="catalytic activity">
    <reaction evidence="1">
        <text>uridine + phosphate = alpha-D-ribose 1-phosphate + uracil</text>
        <dbReference type="Rhea" id="RHEA:24388"/>
        <dbReference type="ChEBI" id="CHEBI:16704"/>
        <dbReference type="ChEBI" id="CHEBI:17568"/>
        <dbReference type="ChEBI" id="CHEBI:43474"/>
        <dbReference type="ChEBI" id="CHEBI:57720"/>
        <dbReference type="EC" id="2.4.2.2"/>
    </reaction>
</comment>
<comment type="catalytic activity">
    <reaction evidence="1">
        <text>xanthosine + phosphate = alpha-D-ribose 1-phosphate + xanthine</text>
        <dbReference type="Rhea" id="RHEA:27638"/>
        <dbReference type="ChEBI" id="CHEBI:17712"/>
        <dbReference type="ChEBI" id="CHEBI:18107"/>
        <dbReference type="ChEBI" id="CHEBI:43474"/>
        <dbReference type="ChEBI" id="CHEBI:57720"/>
        <dbReference type="EC" id="2.4.2.1"/>
    </reaction>
</comment>
<comment type="similarity">
    <text evidence="1">Belongs to the nucleoside phosphorylase PpnP family.</text>
</comment>
<reference key="1">
    <citation type="journal article" date="2010" name="Appl. Environ. Microbiol.">
        <title>The genome sequence of Psychrobacter arcticus 273-4, a psychroactive Siberian permafrost bacterium, reveals mechanisms for adaptation to low-temperature growth.</title>
        <authorList>
            <person name="Ayala-del-Rio H.L."/>
            <person name="Chain P.S."/>
            <person name="Grzymski J.J."/>
            <person name="Ponder M.A."/>
            <person name="Ivanova N."/>
            <person name="Bergholz P.W."/>
            <person name="Di Bartolo G."/>
            <person name="Hauser L."/>
            <person name="Land M."/>
            <person name="Bakermans C."/>
            <person name="Rodrigues D."/>
            <person name="Klappenbach J."/>
            <person name="Zarka D."/>
            <person name="Larimer F."/>
            <person name="Richardson P."/>
            <person name="Murray A."/>
            <person name="Thomashow M."/>
            <person name="Tiedje J.M."/>
        </authorList>
    </citation>
    <scope>NUCLEOTIDE SEQUENCE [LARGE SCALE GENOMIC DNA]</scope>
    <source>
        <strain>DSM 17307 / VKM B-2377 / 273-4</strain>
    </source>
</reference>
<evidence type="ECO:0000255" key="1">
    <source>
        <dbReference type="HAMAP-Rule" id="MF_01537"/>
    </source>
</evidence>
<organism>
    <name type="scientific">Psychrobacter arcticus (strain DSM 17307 / VKM B-2377 / 273-4)</name>
    <dbReference type="NCBI Taxonomy" id="259536"/>
    <lineage>
        <taxon>Bacteria</taxon>
        <taxon>Pseudomonadati</taxon>
        <taxon>Pseudomonadota</taxon>
        <taxon>Gammaproteobacteria</taxon>
        <taxon>Moraxellales</taxon>
        <taxon>Moraxellaceae</taxon>
        <taxon>Psychrobacter</taxon>
    </lineage>
</organism>
<keyword id="KW-0328">Glycosyltransferase</keyword>
<keyword id="KW-1185">Reference proteome</keyword>
<keyword id="KW-0808">Transferase</keyword>
<feature type="chain" id="PRO_0000298715" description="Pyrimidine/purine nucleoside phosphorylase 2">
    <location>
        <begin position="1"/>
        <end position="94"/>
    </location>
</feature>
<proteinExistence type="inferred from homology"/>
<name>PPNP2_PSYA2</name>
<sequence>MPSVNNYFDNKVTSIAFQTATKPATVGVMEIGDYEFGTSEFETMTVVSGALTVKLPESDEWQTFNAGAQFTVDANQKFQVKVEVETAYLCTYGE</sequence>
<dbReference type="EC" id="2.4.2.1" evidence="1"/>
<dbReference type="EC" id="2.4.2.2" evidence="1"/>
<dbReference type="EMBL" id="CP000082">
    <property type="protein sequence ID" value="AAZ18673.1"/>
    <property type="molecule type" value="Genomic_DNA"/>
</dbReference>
<dbReference type="RefSeq" id="WP_011280100.1">
    <property type="nucleotide sequence ID" value="NC_007204.1"/>
</dbReference>
<dbReference type="SMR" id="Q4FTI5"/>
<dbReference type="STRING" id="259536.Psyc_0820"/>
<dbReference type="KEGG" id="par:Psyc_0820"/>
<dbReference type="eggNOG" id="COG3123">
    <property type="taxonomic scope" value="Bacteria"/>
</dbReference>
<dbReference type="HOGENOM" id="CLU_157874_0_0_6"/>
<dbReference type="OrthoDB" id="9793848at2"/>
<dbReference type="Proteomes" id="UP000000546">
    <property type="component" value="Chromosome"/>
</dbReference>
<dbReference type="GO" id="GO:0005829">
    <property type="term" value="C:cytosol"/>
    <property type="evidence" value="ECO:0007669"/>
    <property type="project" value="TreeGrafter"/>
</dbReference>
<dbReference type="GO" id="GO:0047975">
    <property type="term" value="F:guanosine phosphorylase activity"/>
    <property type="evidence" value="ECO:0007669"/>
    <property type="project" value="UniProtKB-EC"/>
</dbReference>
<dbReference type="GO" id="GO:0004731">
    <property type="term" value="F:purine-nucleoside phosphorylase activity"/>
    <property type="evidence" value="ECO:0007669"/>
    <property type="project" value="UniProtKB-UniRule"/>
</dbReference>
<dbReference type="GO" id="GO:0009032">
    <property type="term" value="F:thymidine phosphorylase activity"/>
    <property type="evidence" value="ECO:0007669"/>
    <property type="project" value="UniProtKB-EC"/>
</dbReference>
<dbReference type="GO" id="GO:0004850">
    <property type="term" value="F:uridine phosphorylase activity"/>
    <property type="evidence" value="ECO:0007669"/>
    <property type="project" value="UniProtKB-EC"/>
</dbReference>
<dbReference type="FunFam" id="2.60.120.10:FF:000016">
    <property type="entry name" value="Pyrimidine/purine nucleoside phosphorylase"/>
    <property type="match status" value="1"/>
</dbReference>
<dbReference type="Gene3D" id="2.60.120.10">
    <property type="entry name" value="Jelly Rolls"/>
    <property type="match status" value="1"/>
</dbReference>
<dbReference type="HAMAP" id="MF_01537">
    <property type="entry name" value="Nucleos_phosphorylase_PpnP"/>
    <property type="match status" value="1"/>
</dbReference>
<dbReference type="InterPro" id="IPR009664">
    <property type="entry name" value="Ppnp"/>
</dbReference>
<dbReference type="InterPro" id="IPR014710">
    <property type="entry name" value="RmlC-like_jellyroll"/>
</dbReference>
<dbReference type="InterPro" id="IPR011051">
    <property type="entry name" value="RmlC_Cupin_sf"/>
</dbReference>
<dbReference type="PANTHER" id="PTHR36540">
    <property type="entry name" value="PYRIMIDINE/PURINE NUCLEOSIDE PHOSPHORYLASE"/>
    <property type="match status" value="1"/>
</dbReference>
<dbReference type="PANTHER" id="PTHR36540:SF1">
    <property type="entry name" value="PYRIMIDINE_PURINE NUCLEOSIDE PHOSPHORYLASE"/>
    <property type="match status" value="1"/>
</dbReference>
<dbReference type="Pfam" id="PF06865">
    <property type="entry name" value="Ppnp"/>
    <property type="match status" value="1"/>
</dbReference>
<dbReference type="SUPFAM" id="SSF51182">
    <property type="entry name" value="RmlC-like cupins"/>
    <property type="match status" value="1"/>
</dbReference>